<gene>
    <name evidence="2" type="primary">spfP</name>
    <name type="ordered locus">b4837</name>
</gene>
<evidence type="ECO:0000269" key="1">
    <source>
    </source>
</evidence>
<evidence type="ECO:0000303" key="2">
    <source>
    </source>
</evidence>
<reference key="1">
    <citation type="journal article" date="1997" name="Science">
        <title>The complete genome sequence of Escherichia coli K-12.</title>
        <authorList>
            <person name="Blattner F.R."/>
            <person name="Plunkett G. III"/>
            <person name="Bloch C.A."/>
            <person name="Perna N.T."/>
            <person name="Burland V."/>
            <person name="Riley M."/>
            <person name="Collado-Vides J."/>
            <person name="Glasner J.D."/>
            <person name="Rode C.K."/>
            <person name="Mayhew G.F."/>
            <person name="Gregor J."/>
            <person name="Davis N.W."/>
            <person name="Kirkpatrick H.A."/>
            <person name="Goeden M.A."/>
            <person name="Rose D.J."/>
            <person name="Mau B."/>
            <person name="Shao Y."/>
        </authorList>
    </citation>
    <scope>NUCLEOTIDE SEQUENCE [LARGE SCALE GENOMIC DNA]</scope>
    <source>
        <strain>K12 / MG1655 / ATCC 47076</strain>
    </source>
</reference>
<reference key="2">
    <citation type="journal article" date="2022" name="Proc. Natl. Acad. Sci. U.S.A.">
        <title>Dual-function Spot 42 RNA encodes a 15-amino acid protein that regulates the CRP transcription factor.</title>
        <authorList>
            <person name="Aoyama J.J."/>
            <person name="Raina M."/>
            <person name="Zhong A."/>
            <person name="Storz G."/>
        </authorList>
    </citation>
    <scope>IDENTIFICATION</scope>
    <scope>FUNCTION</scope>
    <scope>INTERACTION WITH CRP</scope>
    <scope>INDUCTION</scope>
    <scope>DISRUPTION PHENOTYPE</scope>
    <scope>MUTAGENESIS OF PHE-2; TYR-3; SER-5; LEU-8; HIS-10 AND PHE-14</scope>
    <source>
        <strain>K12 / MG1655 / ATCC 47076</strain>
    </source>
</reference>
<comment type="function">
    <text evidence="1">Plays a role in carbon catabolite repression (CCR), which prevents expression of genes involved in catabolism of nonpreferred carbon sources when glucose is present. Encoded in dual-function Spot 42 sRNA (spf gene), it inhibits CRP-mediated gene activation when cells are grown in glucose, especially at higher than 30 degrees Celsius (when Spot 42 sRNA base pairing may be less efficient). Overexpression of this protein leads to decreased cell growth on non-glucose carbon sources, with particularly poor growth on galactose. Its overexpression blocks expression of some but not all CRP-dependent operons when grown on the appropriate sugar (blocks galactose- and maltose- but not sorbitol-specific operons), decreases the ability of CRP to activate transcription from the galE P1 promoter. Overexpression has no effect on CRP levels. The base-pairing activity of Spot 42 and the protein-coding activity of SpfP can be genetically separated.</text>
</comment>
<comment type="subunit">
    <text evidence="1">Interacts with DNA-binding transcriptional dual regulator CRP.</text>
</comment>
<comment type="induction">
    <text evidence="1">Higher expression after 5 minutes at 42 and 45 compared to 30 degrees Celsius; at 10 minutes the protein levels are similar at all temperatures (at protein level).</text>
</comment>
<comment type="disruption phenotype">
    <text evidence="1">Cells no longer have growth defect on galactose (upon overexpression).</text>
</comment>
<comment type="miscellaneous">
    <text evidence="1">Encoded within the Spot 42 sRNA (gene spf, a dual-function sRNA) which acts both as an sRNA and mRNA.</text>
</comment>
<organism>
    <name type="scientific">Escherichia coli (strain K12)</name>
    <dbReference type="NCBI Taxonomy" id="83333"/>
    <lineage>
        <taxon>Bacteria</taxon>
        <taxon>Pseudomonadati</taxon>
        <taxon>Pseudomonadota</taxon>
        <taxon>Gammaproteobacteria</taxon>
        <taxon>Enterobacterales</taxon>
        <taxon>Enterobacteriaceae</taxon>
        <taxon>Escherichia</taxon>
    </lineage>
</organism>
<feature type="chain" id="PRO_0000457622" description="Small protein SpfP">
    <location>
        <begin position="1"/>
        <end position="15"/>
    </location>
</feature>
<feature type="mutagenesis site" description="Increases severity of growth defect on galactose upon overexpression." evidence="1">
    <original>F</original>
    <variation>A</variation>
    <location>
        <position position="2"/>
    </location>
</feature>
<feature type="mutagenesis site" description="Partly relieves growth defect on galactose upon overexpression." evidence="1">
    <original>Y</original>
    <variation>A</variation>
    <location>
        <position position="3"/>
    </location>
</feature>
<feature type="mutagenesis site" description="Increases severity of growth defect on galactose upon overexpression." evidence="1">
    <original>S</original>
    <variation>A</variation>
    <location>
        <position position="5"/>
    </location>
</feature>
<feature type="mutagenesis site" description="Partly relieves growth defect on galactose upon overexpression." evidence="1">
    <original>L</original>
    <variation>A</variation>
    <location>
        <position position="8"/>
    </location>
</feature>
<feature type="mutagenesis site" description="No growth defect on galactose upon overexpression, no effect on galactose- or maltose-specific operon expression." evidence="1">
    <original>H</original>
    <variation>A</variation>
    <location>
        <position position="10"/>
    </location>
</feature>
<feature type="mutagenesis site" description="Partly relieves growth defect on galactose upon overexpression." evidence="1">
    <original>F</original>
    <variation>A</variation>
    <location>
        <position position="14"/>
    </location>
</feature>
<accession>P0DW56</accession>
<proteinExistence type="evidence at protein level"/>
<dbReference type="EMBL" id="U00096">
    <property type="status" value="NOT_ANNOTATED_CDS"/>
    <property type="molecule type" value="Genomic_DNA"/>
</dbReference>
<dbReference type="Proteomes" id="UP000000625">
    <property type="component" value="Chromosome"/>
</dbReference>
<dbReference type="GO" id="GO:0061980">
    <property type="term" value="F:regulatory RNA binding"/>
    <property type="evidence" value="ECO:0000314"/>
    <property type="project" value="EcoCyc"/>
</dbReference>
<dbReference type="GO" id="GO:0043610">
    <property type="term" value="P:regulation of carbohydrate utilization"/>
    <property type="evidence" value="ECO:0000315"/>
    <property type="project" value="EcoCyc"/>
</dbReference>
<keyword id="KW-1185">Reference proteome</keyword>
<keyword id="KW-0804">Transcription</keyword>
<keyword id="KW-0805">Transcription regulation</keyword>
<name>SPFP_ECOLI</name>
<protein>
    <recommendedName>
        <fullName evidence="2">Small protein SpfP</fullName>
    </recommendedName>
</protein>
<sequence>MFYLSDLLLHVIGFG</sequence>